<protein>
    <recommendedName>
        <fullName evidence="1">Small ribosomal subunit protein uS4</fullName>
    </recommendedName>
    <alternativeName>
        <fullName evidence="3">30S ribosomal protein S4</fullName>
    </alternativeName>
</protein>
<organism>
    <name type="scientific">Salinibacter ruber (strain DSM 13855 / M31)</name>
    <dbReference type="NCBI Taxonomy" id="309807"/>
    <lineage>
        <taxon>Bacteria</taxon>
        <taxon>Pseudomonadati</taxon>
        <taxon>Rhodothermota</taxon>
        <taxon>Rhodothermia</taxon>
        <taxon>Rhodothermales</taxon>
        <taxon>Salinibacteraceae</taxon>
        <taxon>Salinibacter</taxon>
    </lineage>
</organism>
<accession>Q2S3P0</accession>
<feature type="chain" id="PRO_0000293361" description="Small ribosomal subunit protein uS4">
    <location>
        <begin position="1"/>
        <end position="200"/>
    </location>
</feature>
<feature type="domain" description="S4 RNA-binding" evidence="1">
    <location>
        <begin position="92"/>
        <end position="154"/>
    </location>
</feature>
<feature type="region of interest" description="Disordered" evidence="2">
    <location>
        <begin position="1"/>
        <end position="44"/>
    </location>
</feature>
<feature type="compositionally biased region" description="Basic residues" evidence="2">
    <location>
        <begin position="1"/>
        <end position="13"/>
    </location>
</feature>
<dbReference type="EMBL" id="CP000159">
    <property type="protein sequence ID" value="ABC46071.1"/>
    <property type="molecule type" value="Genomic_DNA"/>
</dbReference>
<dbReference type="RefSeq" id="WP_011403819.1">
    <property type="nucleotide sequence ID" value="NC_007677.1"/>
</dbReference>
<dbReference type="RefSeq" id="YP_445191.1">
    <property type="nucleotide sequence ID" value="NC_007677.1"/>
</dbReference>
<dbReference type="SMR" id="Q2S3P0"/>
<dbReference type="STRING" id="309807.SRU_1059"/>
<dbReference type="EnsemblBacteria" id="ABC46071">
    <property type="protein sequence ID" value="ABC46071"/>
    <property type="gene ID" value="SRU_1059"/>
</dbReference>
<dbReference type="GeneID" id="83727988"/>
<dbReference type="KEGG" id="sru:SRU_1059"/>
<dbReference type="PATRIC" id="fig|309807.25.peg.1097"/>
<dbReference type="eggNOG" id="COG0522">
    <property type="taxonomic scope" value="Bacteria"/>
</dbReference>
<dbReference type="HOGENOM" id="CLU_092403_0_2_10"/>
<dbReference type="OrthoDB" id="9803672at2"/>
<dbReference type="Proteomes" id="UP000008674">
    <property type="component" value="Chromosome"/>
</dbReference>
<dbReference type="GO" id="GO:0015935">
    <property type="term" value="C:small ribosomal subunit"/>
    <property type="evidence" value="ECO:0007669"/>
    <property type="project" value="InterPro"/>
</dbReference>
<dbReference type="GO" id="GO:0019843">
    <property type="term" value="F:rRNA binding"/>
    <property type="evidence" value="ECO:0007669"/>
    <property type="project" value="UniProtKB-UniRule"/>
</dbReference>
<dbReference type="GO" id="GO:0003735">
    <property type="term" value="F:structural constituent of ribosome"/>
    <property type="evidence" value="ECO:0007669"/>
    <property type="project" value="InterPro"/>
</dbReference>
<dbReference type="GO" id="GO:0042274">
    <property type="term" value="P:ribosomal small subunit biogenesis"/>
    <property type="evidence" value="ECO:0007669"/>
    <property type="project" value="TreeGrafter"/>
</dbReference>
<dbReference type="GO" id="GO:0006412">
    <property type="term" value="P:translation"/>
    <property type="evidence" value="ECO:0007669"/>
    <property type="project" value="UniProtKB-UniRule"/>
</dbReference>
<dbReference type="CDD" id="cd00165">
    <property type="entry name" value="S4"/>
    <property type="match status" value="1"/>
</dbReference>
<dbReference type="FunFam" id="3.10.290.10:FF:000001">
    <property type="entry name" value="30S ribosomal protein S4"/>
    <property type="match status" value="1"/>
</dbReference>
<dbReference type="Gene3D" id="1.10.1050.10">
    <property type="entry name" value="Ribosomal Protein S4 Delta 41, Chain A, domain 1"/>
    <property type="match status" value="1"/>
</dbReference>
<dbReference type="Gene3D" id="3.10.290.10">
    <property type="entry name" value="RNA-binding S4 domain"/>
    <property type="match status" value="1"/>
</dbReference>
<dbReference type="HAMAP" id="MF_01306_B">
    <property type="entry name" value="Ribosomal_uS4_B"/>
    <property type="match status" value="1"/>
</dbReference>
<dbReference type="InterPro" id="IPR022801">
    <property type="entry name" value="Ribosomal_uS4"/>
</dbReference>
<dbReference type="InterPro" id="IPR005709">
    <property type="entry name" value="Ribosomal_uS4_bac-type"/>
</dbReference>
<dbReference type="InterPro" id="IPR018079">
    <property type="entry name" value="Ribosomal_uS4_CS"/>
</dbReference>
<dbReference type="InterPro" id="IPR001912">
    <property type="entry name" value="Ribosomal_uS4_N"/>
</dbReference>
<dbReference type="InterPro" id="IPR002942">
    <property type="entry name" value="S4_RNA-bd"/>
</dbReference>
<dbReference type="InterPro" id="IPR036986">
    <property type="entry name" value="S4_RNA-bd_sf"/>
</dbReference>
<dbReference type="NCBIfam" id="NF003717">
    <property type="entry name" value="PRK05327.1"/>
    <property type="match status" value="1"/>
</dbReference>
<dbReference type="NCBIfam" id="TIGR01017">
    <property type="entry name" value="rpsD_bact"/>
    <property type="match status" value="1"/>
</dbReference>
<dbReference type="PANTHER" id="PTHR11831">
    <property type="entry name" value="30S 40S RIBOSOMAL PROTEIN"/>
    <property type="match status" value="1"/>
</dbReference>
<dbReference type="PANTHER" id="PTHR11831:SF4">
    <property type="entry name" value="SMALL RIBOSOMAL SUBUNIT PROTEIN US4M"/>
    <property type="match status" value="1"/>
</dbReference>
<dbReference type="Pfam" id="PF00163">
    <property type="entry name" value="Ribosomal_S4"/>
    <property type="match status" value="1"/>
</dbReference>
<dbReference type="Pfam" id="PF01479">
    <property type="entry name" value="S4"/>
    <property type="match status" value="1"/>
</dbReference>
<dbReference type="SMART" id="SM01390">
    <property type="entry name" value="Ribosomal_S4"/>
    <property type="match status" value="1"/>
</dbReference>
<dbReference type="SMART" id="SM00363">
    <property type="entry name" value="S4"/>
    <property type="match status" value="1"/>
</dbReference>
<dbReference type="SUPFAM" id="SSF55174">
    <property type="entry name" value="Alpha-L RNA-binding motif"/>
    <property type="match status" value="1"/>
</dbReference>
<dbReference type="PROSITE" id="PS00632">
    <property type="entry name" value="RIBOSOMAL_S4"/>
    <property type="match status" value="1"/>
</dbReference>
<dbReference type="PROSITE" id="PS50889">
    <property type="entry name" value="S4"/>
    <property type="match status" value="1"/>
</dbReference>
<gene>
    <name evidence="1" type="primary">rpsD</name>
    <name type="ordered locus">SRU_1059</name>
</gene>
<keyword id="KW-1185">Reference proteome</keyword>
<keyword id="KW-0687">Ribonucleoprotein</keyword>
<keyword id="KW-0689">Ribosomal protein</keyword>
<keyword id="KW-0694">RNA-binding</keyword>
<keyword id="KW-0699">rRNA-binding</keyword>
<evidence type="ECO:0000255" key="1">
    <source>
        <dbReference type="HAMAP-Rule" id="MF_01306"/>
    </source>
</evidence>
<evidence type="ECO:0000256" key="2">
    <source>
        <dbReference type="SAM" id="MobiDB-lite"/>
    </source>
</evidence>
<evidence type="ECO:0000305" key="3"/>
<sequence>MARYRGPKQKIARRFKEPIFGPSKALERKPYPPGQHGQSRRRRESEYAVQLKEKQKTKYTYGLLERQFKNLFDKASRMQGVTGEKLLILLEARLDNTVFRMGIARTRRQARQFVAHRHIMVNDEVVDIPSYEMSPDDVVSVKPSSQDLEVIQTNVEHRQRTFSWLEMDRQEMKGKFIDYPNREEIPENIDEQLIVELYSK</sequence>
<name>RS4_SALRD</name>
<proteinExistence type="inferred from homology"/>
<reference key="1">
    <citation type="journal article" date="2005" name="Proc. Natl. Acad. Sci. U.S.A.">
        <title>The genome of Salinibacter ruber: convergence and gene exchange among hyperhalophilic bacteria and archaea.</title>
        <authorList>
            <person name="Mongodin E.F."/>
            <person name="Nelson K.E."/>
            <person name="Daugherty S."/>
            <person name="DeBoy R.T."/>
            <person name="Wister J."/>
            <person name="Khouri H."/>
            <person name="Weidman J."/>
            <person name="Walsh D.A."/>
            <person name="Papke R.T."/>
            <person name="Sanchez Perez G."/>
            <person name="Sharma A.K."/>
            <person name="Nesbo C.L."/>
            <person name="MacLeod D."/>
            <person name="Bapteste E."/>
            <person name="Doolittle W.F."/>
            <person name="Charlebois R.L."/>
            <person name="Legault B."/>
            <person name="Rodriguez-Valera F."/>
        </authorList>
    </citation>
    <scope>NUCLEOTIDE SEQUENCE [LARGE SCALE GENOMIC DNA]</scope>
    <source>
        <strain>DSM 13855 / CECT 5946 / M31</strain>
    </source>
</reference>
<comment type="function">
    <text evidence="1">One of the primary rRNA binding proteins, it binds directly to 16S rRNA where it nucleates assembly of the body of the 30S subunit.</text>
</comment>
<comment type="function">
    <text evidence="1">With S5 and S12 plays an important role in translational accuracy.</text>
</comment>
<comment type="subunit">
    <text evidence="1">Part of the 30S ribosomal subunit. Contacts protein S5. The interaction surface between S4 and S5 is involved in control of translational fidelity.</text>
</comment>
<comment type="similarity">
    <text evidence="1">Belongs to the universal ribosomal protein uS4 family.</text>
</comment>